<evidence type="ECO:0000255" key="1">
    <source>
        <dbReference type="HAMAP-Rule" id="MF_00165"/>
    </source>
</evidence>
<protein>
    <recommendedName>
        <fullName evidence="1">Thymidylate kinase</fullName>
        <ecNumber evidence="1">2.7.4.9</ecNumber>
    </recommendedName>
    <alternativeName>
        <fullName evidence="1">dTMP kinase</fullName>
    </alternativeName>
</protein>
<sequence>MKGLFVTIEGPEGSGKTTLIQGLLPYFEQKEQKVMATREPGGIAISEDIRTILHKQEYTMMEARTEALLYAAARRQHLVEKVMPALDEDYLVLCDRFIDSSLAYQGYARGLGMDKVFEINRFATEDCMPSLTIYLDIEPEVGLARIAKDAGREVNRLDMEDITFHKRVREGYLQVVERFSDRIVLVNADQPMEKLIEEVIQVIEDKLL</sequence>
<gene>
    <name evidence="1" type="primary">tmk</name>
    <name type="ordered locus">BCE_0028</name>
</gene>
<feature type="chain" id="PRO_0000155232" description="Thymidylate kinase">
    <location>
        <begin position="1"/>
        <end position="208"/>
    </location>
</feature>
<feature type="binding site" evidence="1">
    <location>
        <begin position="10"/>
        <end position="17"/>
    </location>
    <ligand>
        <name>ATP</name>
        <dbReference type="ChEBI" id="CHEBI:30616"/>
    </ligand>
</feature>
<dbReference type="EC" id="2.7.4.9" evidence="1"/>
<dbReference type="EMBL" id="AE017194">
    <property type="protein sequence ID" value="AAS38964.1"/>
    <property type="molecule type" value="Genomic_DNA"/>
</dbReference>
<dbReference type="SMR" id="Q73FH8"/>
<dbReference type="KEGG" id="bca:BCE_0028"/>
<dbReference type="HOGENOM" id="CLU_049131_0_2_9"/>
<dbReference type="Proteomes" id="UP000002527">
    <property type="component" value="Chromosome"/>
</dbReference>
<dbReference type="GO" id="GO:0005829">
    <property type="term" value="C:cytosol"/>
    <property type="evidence" value="ECO:0007669"/>
    <property type="project" value="TreeGrafter"/>
</dbReference>
<dbReference type="GO" id="GO:0005524">
    <property type="term" value="F:ATP binding"/>
    <property type="evidence" value="ECO:0007669"/>
    <property type="project" value="UniProtKB-UniRule"/>
</dbReference>
<dbReference type="GO" id="GO:0004798">
    <property type="term" value="F:dTMP kinase activity"/>
    <property type="evidence" value="ECO:0007669"/>
    <property type="project" value="UniProtKB-UniRule"/>
</dbReference>
<dbReference type="GO" id="GO:0006233">
    <property type="term" value="P:dTDP biosynthetic process"/>
    <property type="evidence" value="ECO:0007669"/>
    <property type="project" value="InterPro"/>
</dbReference>
<dbReference type="GO" id="GO:0006235">
    <property type="term" value="P:dTTP biosynthetic process"/>
    <property type="evidence" value="ECO:0007669"/>
    <property type="project" value="UniProtKB-UniRule"/>
</dbReference>
<dbReference type="GO" id="GO:0006227">
    <property type="term" value="P:dUDP biosynthetic process"/>
    <property type="evidence" value="ECO:0007669"/>
    <property type="project" value="TreeGrafter"/>
</dbReference>
<dbReference type="CDD" id="cd01672">
    <property type="entry name" value="TMPK"/>
    <property type="match status" value="1"/>
</dbReference>
<dbReference type="FunFam" id="3.40.50.300:FF:000225">
    <property type="entry name" value="Thymidylate kinase"/>
    <property type="match status" value="1"/>
</dbReference>
<dbReference type="Gene3D" id="3.40.50.300">
    <property type="entry name" value="P-loop containing nucleotide triphosphate hydrolases"/>
    <property type="match status" value="1"/>
</dbReference>
<dbReference type="HAMAP" id="MF_00165">
    <property type="entry name" value="Thymidylate_kinase"/>
    <property type="match status" value="1"/>
</dbReference>
<dbReference type="InterPro" id="IPR027417">
    <property type="entry name" value="P-loop_NTPase"/>
</dbReference>
<dbReference type="InterPro" id="IPR039430">
    <property type="entry name" value="Thymidylate_kin-like_dom"/>
</dbReference>
<dbReference type="InterPro" id="IPR018095">
    <property type="entry name" value="Thymidylate_kin_CS"/>
</dbReference>
<dbReference type="InterPro" id="IPR018094">
    <property type="entry name" value="Thymidylate_kinase"/>
</dbReference>
<dbReference type="NCBIfam" id="TIGR00041">
    <property type="entry name" value="DTMP_kinase"/>
    <property type="match status" value="1"/>
</dbReference>
<dbReference type="PANTHER" id="PTHR10344">
    <property type="entry name" value="THYMIDYLATE KINASE"/>
    <property type="match status" value="1"/>
</dbReference>
<dbReference type="PANTHER" id="PTHR10344:SF4">
    <property type="entry name" value="UMP-CMP KINASE 2, MITOCHONDRIAL"/>
    <property type="match status" value="1"/>
</dbReference>
<dbReference type="Pfam" id="PF02223">
    <property type="entry name" value="Thymidylate_kin"/>
    <property type="match status" value="1"/>
</dbReference>
<dbReference type="SUPFAM" id="SSF52540">
    <property type="entry name" value="P-loop containing nucleoside triphosphate hydrolases"/>
    <property type="match status" value="1"/>
</dbReference>
<dbReference type="PROSITE" id="PS01331">
    <property type="entry name" value="THYMIDYLATE_KINASE"/>
    <property type="match status" value="1"/>
</dbReference>
<accession>Q73FH8</accession>
<proteinExistence type="inferred from homology"/>
<organism>
    <name type="scientific">Bacillus cereus (strain ATCC 10987 / NRS 248)</name>
    <dbReference type="NCBI Taxonomy" id="222523"/>
    <lineage>
        <taxon>Bacteria</taxon>
        <taxon>Bacillati</taxon>
        <taxon>Bacillota</taxon>
        <taxon>Bacilli</taxon>
        <taxon>Bacillales</taxon>
        <taxon>Bacillaceae</taxon>
        <taxon>Bacillus</taxon>
        <taxon>Bacillus cereus group</taxon>
    </lineage>
</organism>
<comment type="function">
    <text evidence="1">Phosphorylation of dTMP to form dTDP in both de novo and salvage pathways of dTTP synthesis.</text>
</comment>
<comment type="catalytic activity">
    <reaction evidence="1">
        <text>dTMP + ATP = dTDP + ADP</text>
        <dbReference type="Rhea" id="RHEA:13517"/>
        <dbReference type="ChEBI" id="CHEBI:30616"/>
        <dbReference type="ChEBI" id="CHEBI:58369"/>
        <dbReference type="ChEBI" id="CHEBI:63528"/>
        <dbReference type="ChEBI" id="CHEBI:456216"/>
        <dbReference type="EC" id="2.7.4.9"/>
    </reaction>
</comment>
<comment type="similarity">
    <text evidence="1">Belongs to the thymidylate kinase family.</text>
</comment>
<keyword id="KW-0067">ATP-binding</keyword>
<keyword id="KW-0418">Kinase</keyword>
<keyword id="KW-0545">Nucleotide biosynthesis</keyword>
<keyword id="KW-0547">Nucleotide-binding</keyword>
<keyword id="KW-0808">Transferase</keyword>
<name>KTHY_BACC1</name>
<reference key="1">
    <citation type="journal article" date="2004" name="Nucleic Acids Res.">
        <title>The genome sequence of Bacillus cereus ATCC 10987 reveals metabolic adaptations and a large plasmid related to Bacillus anthracis pXO1.</title>
        <authorList>
            <person name="Rasko D.A."/>
            <person name="Ravel J."/>
            <person name="Oekstad O.A."/>
            <person name="Helgason E."/>
            <person name="Cer R.Z."/>
            <person name="Jiang L."/>
            <person name="Shores K.A."/>
            <person name="Fouts D.E."/>
            <person name="Tourasse N.J."/>
            <person name="Angiuoli S.V."/>
            <person name="Kolonay J.F."/>
            <person name="Nelson W.C."/>
            <person name="Kolstoe A.-B."/>
            <person name="Fraser C.M."/>
            <person name="Read T.D."/>
        </authorList>
    </citation>
    <scope>NUCLEOTIDE SEQUENCE [LARGE SCALE GENOMIC DNA]</scope>
    <source>
        <strain>ATCC 10987 / NRS 248</strain>
    </source>
</reference>